<comment type="function">
    <text evidence="1">Forms a proton-selective ion channel that is necessary for the efficient release of the viral genome during virus entry. After attaching to the cell surface, the virion enters the cell by endocytosis. Acidification of the endosome triggers M2 ion channel activity. The influx of protons into virion interior is believed to disrupt interactions between the viral ribonucleoprotein (RNP), matrix protein 1 (M1), and lipid bilayers, thereby freeing the viral genome from interaction with viral proteins and enabling RNA segments to migrate to the host cell nucleus, where influenza virus RNA transcription and replication occur. Also plays a role in viral proteins secretory pathway. Elevates the intravesicular pH of normally acidic compartments, such as trans-Golgi network, preventing newly formed hemagglutinin from premature switching to the fusion-active conformation.</text>
</comment>
<comment type="activity regulation">
    <text>The M2 protein from most influenza A strains is inhibited by amantadine and rimantadine, resulting in viral uncoating incapacity. Emergence of amantadine-resistant variants is usually rapid.</text>
</comment>
<comment type="subunit">
    <text evidence="1">Homotetramer; composed of two disulfide-linked dimers held together by non-covalent interactions. May interact with matrix protein 1.</text>
</comment>
<comment type="subcellular location">
    <subcellularLocation>
        <location evidence="1">Virion membrane</location>
    </subcellularLocation>
    <subcellularLocation>
        <location evidence="1">Host apical cell membrane</location>
        <topology evidence="1">Single-pass type III membrane protein</topology>
    </subcellularLocation>
    <text evidence="1">Abundantly expressed at the apical plasma membrane in infected polarized epithelial cells, in close proximity to budding and assembled virions. Minor component of virions (only 16-20 molecules/virion).</text>
</comment>
<comment type="alternative products">
    <event type="alternative splicing"/>
    <isoform>
        <id>P10920-1</id>
        <name>M2</name>
        <sequence type="displayed"/>
    </isoform>
    <isoform>
        <id>P69276-1</id>
        <name>M1</name>
        <sequence type="external"/>
    </isoform>
    <text>Only the first 9 residues are shared by the 2 isoforms.</text>
</comment>
<comment type="domain">
    <text evidence="1">Cytoplasmic tail plays an important role in virion assembly and morphogenesis.</text>
</comment>
<comment type="miscellaneous">
    <text evidence="1">When the channel is activated, one or more imidazole moieties of His-37 probably become bi-protonated.</text>
</comment>
<comment type="similarity">
    <text evidence="1">Belongs to the influenza viruses matrix protein M2 family.</text>
</comment>
<evidence type="ECO:0000255" key="1">
    <source>
        <dbReference type="HAMAP-Rule" id="MF_04069"/>
    </source>
</evidence>
<evidence type="ECO:0000256" key="2">
    <source>
        <dbReference type="SAM" id="MobiDB-lite"/>
    </source>
</evidence>
<keyword id="KW-0025">Alternative splicing</keyword>
<keyword id="KW-1015">Disulfide bond</keyword>
<keyword id="KW-0325">Glycoprotein</keyword>
<keyword id="KW-1032">Host cell membrane</keyword>
<keyword id="KW-1043">Host membrane</keyword>
<keyword id="KW-0945">Host-virus interaction</keyword>
<keyword id="KW-0375">Hydrogen ion transport</keyword>
<keyword id="KW-1083">Inhibition of host autophagy by virus</keyword>
<keyword id="KW-0407">Ion channel</keyword>
<keyword id="KW-0406">Ion transport</keyword>
<keyword id="KW-0449">Lipoprotein</keyword>
<keyword id="KW-0472">Membrane</keyword>
<keyword id="KW-0564">Palmitate</keyword>
<keyword id="KW-0597">Phosphoprotein</keyword>
<keyword id="KW-0735">Signal-anchor</keyword>
<keyword id="KW-0812">Transmembrane</keyword>
<keyword id="KW-1133">Transmembrane helix</keyword>
<keyword id="KW-0813">Transport</keyword>
<keyword id="KW-1182">Viral ion channel</keyword>
<keyword id="KW-0946">Virion</keyword>
<proteinExistence type="inferred from homology"/>
<dbReference type="EMBL" id="X08093">
    <property type="protein sequence ID" value="CAA30893.1"/>
    <property type="molecule type" value="Genomic_RNA"/>
</dbReference>
<dbReference type="SMR" id="P10920"/>
<dbReference type="IntAct" id="P10920">
    <property type="interactions" value="1"/>
</dbReference>
<dbReference type="GlyCosmos" id="P10920">
    <property type="glycosylation" value="1 site, No reported glycans"/>
</dbReference>
<dbReference type="GO" id="GO:0020002">
    <property type="term" value="C:host cell plasma membrane"/>
    <property type="evidence" value="ECO:0007669"/>
    <property type="project" value="UniProtKB-SubCell"/>
</dbReference>
<dbReference type="GO" id="GO:0016020">
    <property type="term" value="C:membrane"/>
    <property type="evidence" value="ECO:0007669"/>
    <property type="project" value="UniProtKB-UniRule"/>
</dbReference>
<dbReference type="GO" id="GO:0055036">
    <property type="term" value="C:virion membrane"/>
    <property type="evidence" value="ECO:0007669"/>
    <property type="project" value="UniProtKB-SubCell"/>
</dbReference>
<dbReference type="GO" id="GO:0005216">
    <property type="term" value="F:monoatomic ion channel activity"/>
    <property type="evidence" value="ECO:0007669"/>
    <property type="project" value="UniProtKB-UniRule"/>
</dbReference>
<dbReference type="GO" id="GO:0015078">
    <property type="term" value="F:proton transmembrane transporter activity"/>
    <property type="evidence" value="ECO:0007669"/>
    <property type="project" value="UniProtKB-UniRule"/>
</dbReference>
<dbReference type="GO" id="GO:0051259">
    <property type="term" value="P:protein complex oligomerization"/>
    <property type="evidence" value="ECO:0007669"/>
    <property type="project" value="UniProtKB-UniRule"/>
</dbReference>
<dbReference type="GO" id="GO:0044694">
    <property type="term" value="P:symbiont genome entry into host cell via pore formation in plasma membrane"/>
    <property type="evidence" value="ECO:0007669"/>
    <property type="project" value="UniProtKB-UniRule"/>
</dbReference>
<dbReference type="GO" id="GO:0140321">
    <property type="term" value="P:symbiont-mediated suppression of host autophagy"/>
    <property type="evidence" value="ECO:0007669"/>
    <property type="project" value="UniProtKB-KW"/>
</dbReference>
<dbReference type="Gene3D" id="6.10.250.1640">
    <property type="match status" value="1"/>
</dbReference>
<dbReference type="HAMAP" id="MF_04069">
    <property type="entry name" value="INFV_M2"/>
    <property type="match status" value="1"/>
</dbReference>
<dbReference type="InterPro" id="IPR002089">
    <property type="entry name" value="Flu_M2"/>
</dbReference>
<dbReference type="Pfam" id="PF00599">
    <property type="entry name" value="Flu_M2"/>
    <property type="match status" value="1"/>
</dbReference>
<organismHost>
    <name type="scientific">Aves</name>
    <dbReference type="NCBI Taxonomy" id="8782"/>
</organismHost>
<organismHost>
    <name type="scientific">Homo sapiens</name>
    <name type="common">Human</name>
    <dbReference type="NCBI Taxonomy" id="9606"/>
</organismHost>
<gene>
    <name evidence="1" type="primary">M</name>
</gene>
<reference key="1">
    <citation type="journal article" date="1989" name="Nucleic Acids Res.">
        <title>Nucleotide sequences of influenza A virus RNA segment 7: a comparison of five isolates.</title>
        <authorList>
            <person name="Zebedee S.L."/>
            <person name="Lamb R.A."/>
        </authorList>
    </citation>
    <scope>NUCLEOTIDE SEQUENCE [GENOMIC RNA]</scope>
</reference>
<reference key="2">
    <citation type="journal article" date="2004" name="Virus Res.">
        <title>Assembly and budding of influenza virus.</title>
        <authorList>
            <person name="Nayak D.P."/>
            <person name="Hui E.K."/>
            <person name="Barman S."/>
        </authorList>
    </citation>
    <scope>REVIEW</scope>
</reference>
<reference key="3">
    <citation type="journal article" date="2003" name="FEBS Lett.">
        <title>Proton conduction through the M2 protein of the influenza A virus; a quantitative, mechanistic analysis of experimental data.</title>
        <authorList>
            <person name="Lear J.D."/>
        </authorList>
    </citation>
    <scope>REVIEW</scope>
</reference>
<reference key="4">
    <citation type="journal article" date="2003" name="FEBS Lett.">
        <title>Computational studies of proton transport through the M2 channel.</title>
        <authorList>
            <person name="Wu Y."/>
            <person name="Voth G.A."/>
        </authorList>
    </citation>
    <scope>REVIEW</scope>
</reference>
<organism>
    <name type="scientific">Influenza A virus (strain A/Singapore/1/1957 H2N2)</name>
    <dbReference type="NCBI Taxonomy" id="382781"/>
    <lineage>
        <taxon>Viruses</taxon>
        <taxon>Riboviria</taxon>
        <taxon>Orthornavirae</taxon>
        <taxon>Negarnaviricota</taxon>
        <taxon>Polyploviricotina</taxon>
        <taxon>Insthoviricetes</taxon>
        <taxon>Articulavirales</taxon>
        <taxon>Orthomyxoviridae</taxon>
        <taxon>Alphainfluenzavirus</taxon>
        <taxon>Alphainfluenzavirus influenzae</taxon>
        <taxon>Influenza A virus</taxon>
    </lineage>
</organism>
<sequence length="97" mass="11185">MSLLTEVETPIRNEWGCRCNDSSDPLVVAASIIGILHLILWILDRLFFKCIYRFFKHGLKRGPSTEGVPESMREEYRKEQQSAVDADDSHFVSIELE</sequence>
<feature type="chain" id="PRO_0000078891" description="Matrix protein 2">
    <location>
        <begin position="1"/>
        <end position="97"/>
    </location>
</feature>
<feature type="topological domain" description="Virion surface" evidence="1">
    <location>
        <begin position="1"/>
        <end position="22"/>
    </location>
</feature>
<feature type="transmembrane region" description="Helical; Signal-anchor for type III membrane protein" evidence="1">
    <location>
        <begin position="23"/>
        <end position="43"/>
    </location>
</feature>
<feature type="topological domain" description="Intravirion" evidence="1">
    <location>
        <begin position="44"/>
        <end position="97"/>
    </location>
</feature>
<feature type="region of interest" description="Disordered" evidence="2">
    <location>
        <begin position="60"/>
        <end position="88"/>
    </location>
</feature>
<feature type="compositionally biased region" description="Basic and acidic residues" evidence="2">
    <location>
        <begin position="71"/>
        <end position="80"/>
    </location>
</feature>
<feature type="site" description="Essential for channel activity, possibly by being protonated during channel activation, and by forming the channel gate and the selective filter" evidence="1">
    <location>
        <position position="37"/>
    </location>
</feature>
<feature type="site" description="Seems to be involved in pH gating" evidence="1">
    <location>
        <position position="41"/>
    </location>
</feature>
<feature type="modified residue" description="Phosphoserine; by host" evidence="1">
    <location>
        <position position="64"/>
    </location>
</feature>
<feature type="modified residue" description="Phosphoserine; by host" evidence="1">
    <location>
        <position position="82"/>
    </location>
</feature>
<feature type="modified residue" description="Phosphoserine; by host" evidence="1">
    <location>
        <position position="93"/>
    </location>
</feature>
<feature type="lipid moiety-binding region" description="S-palmitoyl cysteine; by host" evidence="1">
    <location>
        <position position="50"/>
    </location>
</feature>
<feature type="glycosylation site" description="N-linked (GlcNAc...) asparagine; by host" evidence="1">
    <location>
        <position position="20"/>
    </location>
</feature>
<feature type="disulfide bond" description="Interchain (with C-17)" evidence="1">
    <location>
        <position position="17"/>
    </location>
</feature>
<feature type="disulfide bond" description="Interchain (with C-19)" evidence="1">
    <location>
        <position position="19"/>
    </location>
</feature>
<accession>P10920</accession>
<protein>
    <recommendedName>
        <fullName evidence="1">Matrix protein 2</fullName>
    </recommendedName>
    <alternativeName>
        <fullName evidence="1">Proton channel protein M2</fullName>
    </alternativeName>
</protein>
<name>M2_I57A5</name>